<reference key="1">
    <citation type="journal article" date="2004" name="Proc. Natl. Acad. Sci. U.S.A.">
        <title>Genome sequence of the enterobacterial phytopathogen Erwinia carotovora subsp. atroseptica and characterization of virulence factors.</title>
        <authorList>
            <person name="Bell K.S."/>
            <person name="Sebaihia M."/>
            <person name="Pritchard L."/>
            <person name="Holden M.T.G."/>
            <person name="Hyman L.J."/>
            <person name="Holeva M.C."/>
            <person name="Thomson N.R."/>
            <person name="Bentley S.D."/>
            <person name="Churcher L.J.C."/>
            <person name="Mungall K."/>
            <person name="Atkin R."/>
            <person name="Bason N."/>
            <person name="Brooks K."/>
            <person name="Chillingworth T."/>
            <person name="Clark K."/>
            <person name="Doggett J."/>
            <person name="Fraser A."/>
            <person name="Hance Z."/>
            <person name="Hauser H."/>
            <person name="Jagels K."/>
            <person name="Moule S."/>
            <person name="Norbertczak H."/>
            <person name="Ormond D."/>
            <person name="Price C."/>
            <person name="Quail M.A."/>
            <person name="Sanders M."/>
            <person name="Walker D."/>
            <person name="Whitehead S."/>
            <person name="Salmond G.P.C."/>
            <person name="Birch P.R.J."/>
            <person name="Parkhill J."/>
            <person name="Toth I.K."/>
        </authorList>
    </citation>
    <scope>NUCLEOTIDE SEQUENCE [LARGE SCALE GENOMIC DNA]</scope>
    <source>
        <strain>SCRI 1043 / ATCC BAA-672</strain>
    </source>
</reference>
<dbReference type="EMBL" id="BX950851">
    <property type="protein sequence ID" value="CAG76922.1"/>
    <property type="molecule type" value="Genomic_DNA"/>
</dbReference>
<dbReference type="RefSeq" id="WP_011095507.1">
    <property type="nucleotide sequence ID" value="NC_004547.2"/>
</dbReference>
<dbReference type="SMR" id="Q6CZX6"/>
<dbReference type="STRING" id="218491.ECA4025"/>
<dbReference type="GeneID" id="57210689"/>
<dbReference type="KEGG" id="eca:ECA4025"/>
<dbReference type="PATRIC" id="fig|218491.5.peg.4091"/>
<dbReference type="eggNOG" id="COG0092">
    <property type="taxonomic scope" value="Bacteria"/>
</dbReference>
<dbReference type="HOGENOM" id="CLU_058591_0_2_6"/>
<dbReference type="OrthoDB" id="9806396at2"/>
<dbReference type="Proteomes" id="UP000007966">
    <property type="component" value="Chromosome"/>
</dbReference>
<dbReference type="GO" id="GO:0022627">
    <property type="term" value="C:cytosolic small ribosomal subunit"/>
    <property type="evidence" value="ECO:0007669"/>
    <property type="project" value="TreeGrafter"/>
</dbReference>
<dbReference type="GO" id="GO:0003729">
    <property type="term" value="F:mRNA binding"/>
    <property type="evidence" value="ECO:0007669"/>
    <property type="project" value="UniProtKB-UniRule"/>
</dbReference>
<dbReference type="GO" id="GO:0019843">
    <property type="term" value="F:rRNA binding"/>
    <property type="evidence" value="ECO:0007669"/>
    <property type="project" value="UniProtKB-UniRule"/>
</dbReference>
<dbReference type="GO" id="GO:0003735">
    <property type="term" value="F:structural constituent of ribosome"/>
    <property type="evidence" value="ECO:0007669"/>
    <property type="project" value="InterPro"/>
</dbReference>
<dbReference type="GO" id="GO:0006412">
    <property type="term" value="P:translation"/>
    <property type="evidence" value="ECO:0007669"/>
    <property type="project" value="UniProtKB-UniRule"/>
</dbReference>
<dbReference type="CDD" id="cd02412">
    <property type="entry name" value="KH-II_30S_S3"/>
    <property type="match status" value="1"/>
</dbReference>
<dbReference type="FunFam" id="3.30.1140.32:FF:000001">
    <property type="entry name" value="30S ribosomal protein S3"/>
    <property type="match status" value="1"/>
</dbReference>
<dbReference type="FunFam" id="3.30.300.20:FF:000001">
    <property type="entry name" value="30S ribosomal protein S3"/>
    <property type="match status" value="1"/>
</dbReference>
<dbReference type="Gene3D" id="3.30.300.20">
    <property type="match status" value="1"/>
</dbReference>
<dbReference type="Gene3D" id="3.30.1140.32">
    <property type="entry name" value="Ribosomal protein S3, C-terminal domain"/>
    <property type="match status" value="1"/>
</dbReference>
<dbReference type="HAMAP" id="MF_01309_B">
    <property type="entry name" value="Ribosomal_uS3_B"/>
    <property type="match status" value="1"/>
</dbReference>
<dbReference type="InterPro" id="IPR004087">
    <property type="entry name" value="KH_dom"/>
</dbReference>
<dbReference type="InterPro" id="IPR015946">
    <property type="entry name" value="KH_dom-like_a/b"/>
</dbReference>
<dbReference type="InterPro" id="IPR004044">
    <property type="entry name" value="KH_dom_type_2"/>
</dbReference>
<dbReference type="InterPro" id="IPR009019">
    <property type="entry name" value="KH_sf_prok-type"/>
</dbReference>
<dbReference type="InterPro" id="IPR036419">
    <property type="entry name" value="Ribosomal_S3_C_sf"/>
</dbReference>
<dbReference type="InterPro" id="IPR005704">
    <property type="entry name" value="Ribosomal_uS3_bac-typ"/>
</dbReference>
<dbReference type="InterPro" id="IPR001351">
    <property type="entry name" value="Ribosomal_uS3_C"/>
</dbReference>
<dbReference type="InterPro" id="IPR018280">
    <property type="entry name" value="Ribosomal_uS3_CS"/>
</dbReference>
<dbReference type="NCBIfam" id="TIGR01009">
    <property type="entry name" value="rpsC_bact"/>
    <property type="match status" value="1"/>
</dbReference>
<dbReference type="PANTHER" id="PTHR11760">
    <property type="entry name" value="30S/40S RIBOSOMAL PROTEIN S3"/>
    <property type="match status" value="1"/>
</dbReference>
<dbReference type="PANTHER" id="PTHR11760:SF19">
    <property type="entry name" value="SMALL RIBOSOMAL SUBUNIT PROTEIN US3C"/>
    <property type="match status" value="1"/>
</dbReference>
<dbReference type="Pfam" id="PF07650">
    <property type="entry name" value="KH_2"/>
    <property type="match status" value="1"/>
</dbReference>
<dbReference type="Pfam" id="PF00189">
    <property type="entry name" value="Ribosomal_S3_C"/>
    <property type="match status" value="1"/>
</dbReference>
<dbReference type="SMART" id="SM00322">
    <property type="entry name" value="KH"/>
    <property type="match status" value="1"/>
</dbReference>
<dbReference type="SUPFAM" id="SSF54814">
    <property type="entry name" value="Prokaryotic type KH domain (KH-domain type II)"/>
    <property type="match status" value="1"/>
</dbReference>
<dbReference type="SUPFAM" id="SSF54821">
    <property type="entry name" value="Ribosomal protein S3 C-terminal domain"/>
    <property type="match status" value="1"/>
</dbReference>
<dbReference type="PROSITE" id="PS50823">
    <property type="entry name" value="KH_TYPE_2"/>
    <property type="match status" value="1"/>
</dbReference>
<dbReference type="PROSITE" id="PS00548">
    <property type="entry name" value="RIBOSOMAL_S3"/>
    <property type="match status" value="1"/>
</dbReference>
<evidence type="ECO:0000255" key="1">
    <source>
        <dbReference type="HAMAP-Rule" id="MF_01309"/>
    </source>
</evidence>
<evidence type="ECO:0000256" key="2">
    <source>
        <dbReference type="SAM" id="MobiDB-lite"/>
    </source>
</evidence>
<evidence type="ECO:0000305" key="3"/>
<keyword id="KW-1185">Reference proteome</keyword>
<keyword id="KW-0687">Ribonucleoprotein</keyword>
<keyword id="KW-0689">Ribosomal protein</keyword>
<keyword id="KW-0694">RNA-binding</keyword>
<keyword id="KW-0699">rRNA-binding</keyword>
<protein>
    <recommendedName>
        <fullName evidence="1">Small ribosomal subunit protein uS3</fullName>
    </recommendedName>
    <alternativeName>
        <fullName evidence="3">30S ribosomal protein S3</fullName>
    </alternativeName>
</protein>
<feature type="chain" id="PRO_0000130119" description="Small ribosomal subunit protein uS3">
    <location>
        <begin position="1"/>
        <end position="233"/>
    </location>
</feature>
<feature type="domain" description="KH type-2" evidence="1">
    <location>
        <begin position="39"/>
        <end position="107"/>
    </location>
</feature>
<feature type="region of interest" description="Disordered" evidence="2">
    <location>
        <begin position="214"/>
        <end position="233"/>
    </location>
</feature>
<proteinExistence type="inferred from homology"/>
<organism>
    <name type="scientific">Pectobacterium atrosepticum (strain SCRI 1043 / ATCC BAA-672)</name>
    <name type="common">Erwinia carotovora subsp. atroseptica</name>
    <dbReference type="NCBI Taxonomy" id="218491"/>
    <lineage>
        <taxon>Bacteria</taxon>
        <taxon>Pseudomonadati</taxon>
        <taxon>Pseudomonadota</taxon>
        <taxon>Gammaproteobacteria</taxon>
        <taxon>Enterobacterales</taxon>
        <taxon>Pectobacteriaceae</taxon>
        <taxon>Pectobacterium</taxon>
    </lineage>
</organism>
<gene>
    <name evidence="1" type="primary">rpsC</name>
    <name type="ordered locus">ECA4025</name>
</gene>
<sequence length="233" mass="26073">MGQKVHPNGIRLGIVKPWNSTWYANTKEFADNLDSDFKVRKYLTKELEKASVSRIVIERPAKSIRVTIHTARPGIVIGKKGEDVEKLRKVVADIAGVPAQINIAEVRKPELDAKLVADSITSQLERRVMFRRAMKRAVQNAMRLGAKGIKVEVSGRLGGAEIARTEWYREGRVPLHTLRADIDYNTSEAHTTYGVIGVKVWIFKGEILGGMAAVEQPEKPSAQPKKQQRKGRK</sequence>
<accession>Q6CZX6</accession>
<comment type="function">
    <text evidence="1">Binds the lower part of the 30S subunit head. Binds mRNA in the 70S ribosome, positioning it for translation.</text>
</comment>
<comment type="subunit">
    <text evidence="1">Part of the 30S ribosomal subunit. Forms a tight complex with proteins S10 and S14.</text>
</comment>
<comment type="similarity">
    <text evidence="1">Belongs to the universal ribosomal protein uS3 family.</text>
</comment>
<name>RS3_PECAS</name>